<gene>
    <name evidence="1" type="primary">purA</name>
    <name type="synonym">adeK</name>
    <name type="ordered locus">PMM0506</name>
</gene>
<feature type="chain" id="PRO_0000095212" description="Adenylosuccinate synthetase">
    <location>
        <begin position="1"/>
        <end position="436"/>
    </location>
</feature>
<feature type="active site" description="Proton acceptor" evidence="1">
    <location>
        <position position="13"/>
    </location>
</feature>
<feature type="active site" description="Proton donor" evidence="1">
    <location>
        <position position="41"/>
    </location>
</feature>
<feature type="binding site" evidence="1">
    <location>
        <begin position="12"/>
        <end position="18"/>
    </location>
    <ligand>
        <name>GTP</name>
        <dbReference type="ChEBI" id="CHEBI:37565"/>
    </ligand>
</feature>
<feature type="binding site" description="in other chain" evidence="1">
    <location>
        <begin position="13"/>
        <end position="16"/>
    </location>
    <ligand>
        <name>IMP</name>
        <dbReference type="ChEBI" id="CHEBI:58053"/>
        <note>ligand shared between dimeric partners</note>
    </ligand>
</feature>
<feature type="binding site" evidence="1">
    <location>
        <position position="13"/>
    </location>
    <ligand>
        <name>Mg(2+)</name>
        <dbReference type="ChEBI" id="CHEBI:18420"/>
    </ligand>
</feature>
<feature type="binding site" description="in other chain" evidence="1">
    <location>
        <begin position="38"/>
        <end position="41"/>
    </location>
    <ligand>
        <name>IMP</name>
        <dbReference type="ChEBI" id="CHEBI:58053"/>
        <note>ligand shared between dimeric partners</note>
    </ligand>
</feature>
<feature type="binding site" evidence="1">
    <location>
        <begin position="40"/>
        <end position="42"/>
    </location>
    <ligand>
        <name>GTP</name>
        <dbReference type="ChEBI" id="CHEBI:37565"/>
    </ligand>
</feature>
<feature type="binding site" evidence="1">
    <location>
        <position position="40"/>
    </location>
    <ligand>
        <name>Mg(2+)</name>
        <dbReference type="ChEBI" id="CHEBI:18420"/>
    </ligand>
</feature>
<feature type="binding site" description="in other chain" evidence="1">
    <location>
        <position position="128"/>
    </location>
    <ligand>
        <name>IMP</name>
        <dbReference type="ChEBI" id="CHEBI:58053"/>
        <note>ligand shared between dimeric partners</note>
    </ligand>
</feature>
<feature type="binding site" evidence="1">
    <location>
        <position position="142"/>
    </location>
    <ligand>
        <name>IMP</name>
        <dbReference type="ChEBI" id="CHEBI:58053"/>
        <note>ligand shared between dimeric partners</note>
    </ligand>
</feature>
<feature type="binding site" description="in other chain" evidence="1">
    <location>
        <position position="223"/>
    </location>
    <ligand>
        <name>IMP</name>
        <dbReference type="ChEBI" id="CHEBI:58053"/>
        <note>ligand shared between dimeric partners</note>
    </ligand>
</feature>
<feature type="binding site" description="in other chain" evidence="1">
    <location>
        <position position="238"/>
    </location>
    <ligand>
        <name>IMP</name>
        <dbReference type="ChEBI" id="CHEBI:58053"/>
        <note>ligand shared between dimeric partners</note>
    </ligand>
</feature>
<feature type="binding site" evidence="1">
    <location>
        <begin position="298"/>
        <end position="304"/>
    </location>
    <ligand>
        <name>substrate</name>
    </ligand>
</feature>
<feature type="binding site" description="in other chain" evidence="1">
    <location>
        <position position="302"/>
    </location>
    <ligand>
        <name>IMP</name>
        <dbReference type="ChEBI" id="CHEBI:58053"/>
        <note>ligand shared between dimeric partners</note>
    </ligand>
</feature>
<feature type="binding site" evidence="1">
    <location>
        <position position="304"/>
    </location>
    <ligand>
        <name>GTP</name>
        <dbReference type="ChEBI" id="CHEBI:37565"/>
    </ligand>
</feature>
<feature type="binding site" evidence="1">
    <location>
        <begin position="330"/>
        <end position="332"/>
    </location>
    <ligand>
        <name>GTP</name>
        <dbReference type="ChEBI" id="CHEBI:37565"/>
    </ligand>
</feature>
<feature type="binding site" evidence="1">
    <location>
        <begin position="412"/>
        <end position="414"/>
    </location>
    <ligand>
        <name>GTP</name>
        <dbReference type="ChEBI" id="CHEBI:37565"/>
    </ligand>
</feature>
<organism>
    <name type="scientific">Prochlorococcus marinus subsp. pastoris (strain CCMP1986 / NIES-2087 / MED4)</name>
    <dbReference type="NCBI Taxonomy" id="59919"/>
    <lineage>
        <taxon>Bacteria</taxon>
        <taxon>Bacillati</taxon>
        <taxon>Cyanobacteriota</taxon>
        <taxon>Cyanophyceae</taxon>
        <taxon>Synechococcales</taxon>
        <taxon>Prochlorococcaceae</taxon>
        <taxon>Prochlorococcus</taxon>
    </lineage>
</organism>
<evidence type="ECO:0000255" key="1">
    <source>
        <dbReference type="HAMAP-Rule" id="MF_00011"/>
    </source>
</evidence>
<comment type="function">
    <text evidence="1">Plays an important role in the de novo pathway of purine nucleotide biosynthesis. Catalyzes the first committed step in the biosynthesis of AMP from IMP.</text>
</comment>
<comment type="catalytic activity">
    <reaction evidence="1">
        <text>IMP + L-aspartate + GTP = N(6)-(1,2-dicarboxyethyl)-AMP + GDP + phosphate + 2 H(+)</text>
        <dbReference type="Rhea" id="RHEA:15753"/>
        <dbReference type="ChEBI" id="CHEBI:15378"/>
        <dbReference type="ChEBI" id="CHEBI:29991"/>
        <dbReference type="ChEBI" id="CHEBI:37565"/>
        <dbReference type="ChEBI" id="CHEBI:43474"/>
        <dbReference type="ChEBI" id="CHEBI:57567"/>
        <dbReference type="ChEBI" id="CHEBI:58053"/>
        <dbReference type="ChEBI" id="CHEBI:58189"/>
        <dbReference type="EC" id="6.3.4.4"/>
    </reaction>
</comment>
<comment type="cofactor">
    <cofactor evidence="1">
        <name>Mg(2+)</name>
        <dbReference type="ChEBI" id="CHEBI:18420"/>
    </cofactor>
    <text evidence="1">Binds 1 Mg(2+) ion per subunit.</text>
</comment>
<comment type="pathway">
    <text evidence="1">Purine metabolism; AMP biosynthesis via de novo pathway; AMP from IMP: step 1/2.</text>
</comment>
<comment type="subunit">
    <text evidence="1">Homodimer.</text>
</comment>
<comment type="subcellular location">
    <subcellularLocation>
        <location evidence="1">Cytoplasm</location>
    </subcellularLocation>
</comment>
<comment type="similarity">
    <text evidence="1">Belongs to the adenylosuccinate synthetase family.</text>
</comment>
<reference key="1">
    <citation type="journal article" date="2003" name="Nature">
        <title>Genome divergence in two Prochlorococcus ecotypes reflects oceanic niche differentiation.</title>
        <authorList>
            <person name="Rocap G."/>
            <person name="Larimer F.W."/>
            <person name="Lamerdin J.E."/>
            <person name="Malfatti S."/>
            <person name="Chain P."/>
            <person name="Ahlgren N.A."/>
            <person name="Arellano A."/>
            <person name="Coleman M."/>
            <person name="Hauser L."/>
            <person name="Hess W.R."/>
            <person name="Johnson Z.I."/>
            <person name="Land M.L."/>
            <person name="Lindell D."/>
            <person name="Post A.F."/>
            <person name="Regala W."/>
            <person name="Shah M."/>
            <person name="Shaw S.L."/>
            <person name="Steglich C."/>
            <person name="Sullivan M.B."/>
            <person name="Ting C.S."/>
            <person name="Tolonen A."/>
            <person name="Webb E.A."/>
            <person name="Zinser E.R."/>
            <person name="Chisholm S.W."/>
        </authorList>
    </citation>
    <scope>NUCLEOTIDE SEQUENCE [LARGE SCALE GENOMIC DNA]</scope>
    <source>
        <strain>CCMP1986 / NIES-2087 / MED4</strain>
    </source>
</reference>
<name>PURA_PROMP</name>
<sequence>MANVVVIGAQWGDEGKGKITDLLSRSADVVVRYQGGVNAGHTIVVDDKVLKLHLIPSGILYRETICLIGSGTVVDPKILLKEIDMLIDNGIDISGLKISSTSHVTMPYHRLLDEAMEADRGSNKIGTTGRGIGPTYADKSQRNGIRIRDLLNEDRLRDVIEIPLKEKNGLLEKIYGIAPLNKDEIIEEYLDYGQRLSKHVVDCTRTIHAAAKNKKNILFEGAQGTLLDLDHGTYPYVTSSNPISGGACIGAGVGPTLIDRVIGVAKAYTTRVGEGPFPTELQGSINDQLCDRGSEFGTTTGRRRRCGWFDGIIGKYAVYVNGLDCLAVTKLDVLDELDEIQVCIAYELDGKEIDYFPTNSDDLKKCKPIFKKLKGWQCSTANCRKLSDLPENAMNYLRFLAELMEVPIAIVSLGANRDQTIVIEDPIHGPKRALLR</sequence>
<protein>
    <recommendedName>
        <fullName evidence="1">Adenylosuccinate synthetase</fullName>
        <shortName evidence="1">AMPSase</shortName>
        <shortName evidence="1">AdSS</shortName>
        <ecNumber evidence="1">6.3.4.4</ecNumber>
    </recommendedName>
    <alternativeName>
        <fullName evidence="1">IMP--aspartate ligase</fullName>
    </alternativeName>
</protein>
<dbReference type="EC" id="6.3.4.4" evidence="1"/>
<dbReference type="EMBL" id="BX548174">
    <property type="protein sequence ID" value="CAE18965.1"/>
    <property type="molecule type" value="Genomic_DNA"/>
</dbReference>
<dbReference type="RefSeq" id="WP_011132141.1">
    <property type="nucleotide sequence ID" value="NC_005072.1"/>
</dbReference>
<dbReference type="SMR" id="Q7V2H1"/>
<dbReference type="STRING" id="59919.PMM0506"/>
<dbReference type="KEGG" id="pmm:PMM0506"/>
<dbReference type="eggNOG" id="COG0104">
    <property type="taxonomic scope" value="Bacteria"/>
</dbReference>
<dbReference type="HOGENOM" id="CLU_029848_0_0_3"/>
<dbReference type="OrthoDB" id="9807553at2"/>
<dbReference type="UniPathway" id="UPA00075">
    <property type="reaction ID" value="UER00335"/>
</dbReference>
<dbReference type="Proteomes" id="UP000001026">
    <property type="component" value="Chromosome"/>
</dbReference>
<dbReference type="GO" id="GO:0005737">
    <property type="term" value="C:cytoplasm"/>
    <property type="evidence" value="ECO:0007669"/>
    <property type="project" value="UniProtKB-SubCell"/>
</dbReference>
<dbReference type="GO" id="GO:0004019">
    <property type="term" value="F:adenylosuccinate synthase activity"/>
    <property type="evidence" value="ECO:0007669"/>
    <property type="project" value="UniProtKB-UniRule"/>
</dbReference>
<dbReference type="GO" id="GO:0005525">
    <property type="term" value="F:GTP binding"/>
    <property type="evidence" value="ECO:0007669"/>
    <property type="project" value="UniProtKB-UniRule"/>
</dbReference>
<dbReference type="GO" id="GO:0000287">
    <property type="term" value="F:magnesium ion binding"/>
    <property type="evidence" value="ECO:0007669"/>
    <property type="project" value="UniProtKB-UniRule"/>
</dbReference>
<dbReference type="GO" id="GO:0044208">
    <property type="term" value="P:'de novo' AMP biosynthetic process"/>
    <property type="evidence" value="ECO:0007669"/>
    <property type="project" value="UniProtKB-UniRule"/>
</dbReference>
<dbReference type="GO" id="GO:0046040">
    <property type="term" value="P:IMP metabolic process"/>
    <property type="evidence" value="ECO:0007669"/>
    <property type="project" value="TreeGrafter"/>
</dbReference>
<dbReference type="CDD" id="cd03108">
    <property type="entry name" value="AdSS"/>
    <property type="match status" value="1"/>
</dbReference>
<dbReference type="FunFam" id="1.10.300.10:FF:000001">
    <property type="entry name" value="Adenylosuccinate synthetase"/>
    <property type="match status" value="1"/>
</dbReference>
<dbReference type="FunFam" id="3.90.170.10:FF:000001">
    <property type="entry name" value="Adenylosuccinate synthetase"/>
    <property type="match status" value="1"/>
</dbReference>
<dbReference type="Gene3D" id="3.40.440.10">
    <property type="entry name" value="Adenylosuccinate Synthetase, subunit A, domain 1"/>
    <property type="match status" value="1"/>
</dbReference>
<dbReference type="Gene3D" id="1.10.300.10">
    <property type="entry name" value="Adenylosuccinate Synthetase, subunit A, domain 2"/>
    <property type="match status" value="1"/>
</dbReference>
<dbReference type="Gene3D" id="3.90.170.10">
    <property type="entry name" value="Adenylosuccinate Synthetase, subunit A, domain 3"/>
    <property type="match status" value="1"/>
</dbReference>
<dbReference type="HAMAP" id="MF_00011">
    <property type="entry name" value="Adenylosucc_synth"/>
    <property type="match status" value="1"/>
</dbReference>
<dbReference type="InterPro" id="IPR018220">
    <property type="entry name" value="Adenylosuccin_syn_GTP-bd"/>
</dbReference>
<dbReference type="InterPro" id="IPR033128">
    <property type="entry name" value="Adenylosuccin_syn_Lys_AS"/>
</dbReference>
<dbReference type="InterPro" id="IPR042109">
    <property type="entry name" value="Adenylosuccinate_synth_dom1"/>
</dbReference>
<dbReference type="InterPro" id="IPR042110">
    <property type="entry name" value="Adenylosuccinate_synth_dom2"/>
</dbReference>
<dbReference type="InterPro" id="IPR042111">
    <property type="entry name" value="Adenylosuccinate_synth_dom3"/>
</dbReference>
<dbReference type="InterPro" id="IPR001114">
    <property type="entry name" value="Adenylosuccinate_synthetase"/>
</dbReference>
<dbReference type="InterPro" id="IPR027417">
    <property type="entry name" value="P-loop_NTPase"/>
</dbReference>
<dbReference type="NCBIfam" id="NF002223">
    <property type="entry name" value="PRK01117.1"/>
    <property type="match status" value="1"/>
</dbReference>
<dbReference type="NCBIfam" id="TIGR00184">
    <property type="entry name" value="purA"/>
    <property type="match status" value="1"/>
</dbReference>
<dbReference type="PANTHER" id="PTHR11846">
    <property type="entry name" value="ADENYLOSUCCINATE SYNTHETASE"/>
    <property type="match status" value="1"/>
</dbReference>
<dbReference type="PANTHER" id="PTHR11846:SF0">
    <property type="entry name" value="ADENYLOSUCCINATE SYNTHETASE"/>
    <property type="match status" value="1"/>
</dbReference>
<dbReference type="Pfam" id="PF00709">
    <property type="entry name" value="Adenylsucc_synt"/>
    <property type="match status" value="1"/>
</dbReference>
<dbReference type="SMART" id="SM00788">
    <property type="entry name" value="Adenylsucc_synt"/>
    <property type="match status" value="1"/>
</dbReference>
<dbReference type="SUPFAM" id="SSF52540">
    <property type="entry name" value="P-loop containing nucleoside triphosphate hydrolases"/>
    <property type="match status" value="1"/>
</dbReference>
<dbReference type="PROSITE" id="PS01266">
    <property type="entry name" value="ADENYLOSUCCIN_SYN_1"/>
    <property type="match status" value="1"/>
</dbReference>
<dbReference type="PROSITE" id="PS00513">
    <property type="entry name" value="ADENYLOSUCCIN_SYN_2"/>
    <property type="match status" value="1"/>
</dbReference>
<accession>Q7V2H1</accession>
<keyword id="KW-0963">Cytoplasm</keyword>
<keyword id="KW-0342">GTP-binding</keyword>
<keyword id="KW-0436">Ligase</keyword>
<keyword id="KW-0460">Magnesium</keyword>
<keyword id="KW-0479">Metal-binding</keyword>
<keyword id="KW-0547">Nucleotide-binding</keyword>
<keyword id="KW-0658">Purine biosynthesis</keyword>
<proteinExistence type="inferred from homology"/>